<name>MTNC_CITK8</name>
<sequence>MIRAIVTDIEGTTSDIRFVHNVLFPYARERLAAFVTARQYAEPVKSILDNLRNEIARPDASTAELIETLFTFMDEDRKSTALKALQGIIWHDGYVNGDFTGHLYPDVLPALEKWKAQGIDLYVYSSGSVAAQKLLFGYSDEGDITHLFSGYFDTHIGAKRETQSYRNIASYIGVAPSQILFLSDVYQELDAAEEAGLRTLQLIRGEGDGASRHHQVHQFDDINPEQILS</sequence>
<feature type="chain" id="PRO_0000357360" description="Enolase-phosphatase E1">
    <location>
        <begin position="1"/>
        <end position="229"/>
    </location>
</feature>
<reference key="1">
    <citation type="submission" date="2007-08" db="EMBL/GenBank/DDBJ databases">
        <authorList>
            <consortium name="The Citrobacter koseri Genome Sequencing Project"/>
            <person name="McClelland M."/>
            <person name="Sanderson E.K."/>
            <person name="Porwollik S."/>
            <person name="Spieth J."/>
            <person name="Clifton W.S."/>
            <person name="Latreille P."/>
            <person name="Courtney L."/>
            <person name="Wang C."/>
            <person name="Pepin K."/>
            <person name="Bhonagiri V."/>
            <person name="Nash W."/>
            <person name="Johnson M."/>
            <person name="Thiruvilangam P."/>
            <person name="Wilson R."/>
        </authorList>
    </citation>
    <scope>NUCLEOTIDE SEQUENCE [LARGE SCALE GENOMIC DNA]</scope>
    <source>
        <strain>ATCC BAA-895 / CDC 4225-83 / SGSC4696</strain>
    </source>
</reference>
<proteinExistence type="inferred from homology"/>
<gene>
    <name evidence="1" type="primary">mtnC</name>
    <name type="ordered locus">CKO_03972</name>
</gene>
<comment type="function">
    <text evidence="1">Bifunctional enzyme that catalyzes the enolization of 2,3-diketo-5-methylthiopentyl-1-phosphate (DK-MTP-1-P) into the intermediate 2-hydroxy-3-keto-5-methylthiopentenyl-1-phosphate (HK-MTPenyl-1-P), which is then dephosphorylated to form the acireductone 1,2-dihydroxy-3-keto-5-methylthiopentene (DHK-MTPene).</text>
</comment>
<comment type="catalytic activity">
    <reaction evidence="1">
        <text>5-methylsulfanyl-2,3-dioxopentyl phosphate + H2O = 1,2-dihydroxy-5-(methylsulfanyl)pent-1-en-3-one + phosphate</text>
        <dbReference type="Rhea" id="RHEA:21700"/>
        <dbReference type="ChEBI" id="CHEBI:15377"/>
        <dbReference type="ChEBI" id="CHEBI:43474"/>
        <dbReference type="ChEBI" id="CHEBI:49252"/>
        <dbReference type="ChEBI" id="CHEBI:58828"/>
        <dbReference type="EC" id="3.1.3.77"/>
    </reaction>
</comment>
<comment type="cofactor">
    <cofactor evidence="1">
        <name>Mg(2+)</name>
        <dbReference type="ChEBI" id="CHEBI:18420"/>
    </cofactor>
    <text evidence="1">Binds 1 Mg(2+) ion per subunit.</text>
</comment>
<comment type="pathway">
    <text evidence="1">Amino-acid biosynthesis; L-methionine biosynthesis via salvage pathway; L-methionine from S-methyl-5-thio-alpha-D-ribose 1-phosphate: step 3/6.</text>
</comment>
<comment type="pathway">
    <text evidence="1">Amino-acid biosynthesis; L-methionine biosynthesis via salvage pathway; L-methionine from S-methyl-5-thio-alpha-D-ribose 1-phosphate: step 4/6.</text>
</comment>
<comment type="subunit">
    <text evidence="1">Monomer.</text>
</comment>
<comment type="similarity">
    <text evidence="1">Belongs to the HAD-like hydrolase superfamily. MasA/MtnC family.</text>
</comment>
<dbReference type="EC" id="3.1.3.77" evidence="1"/>
<dbReference type="EMBL" id="CP000822">
    <property type="protein sequence ID" value="ABV15044.1"/>
    <property type="molecule type" value="Genomic_DNA"/>
</dbReference>
<dbReference type="RefSeq" id="WP_012134736.1">
    <property type="nucleotide sequence ID" value="NC_009792.1"/>
</dbReference>
<dbReference type="SMR" id="A8ANI1"/>
<dbReference type="STRING" id="290338.CKO_03972"/>
<dbReference type="GeneID" id="45137624"/>
<dbReference type="KEGG" id="cko:CKO_03972"/>
<dbReference type="HOGENOM" id="CLU_023273_0_0_6"/>
<dbReference type="OrthoDB" id="9797416at2"/>
<dbReference type="UniPathway" id="UPA00904">
    <property type="reaction ID" value="UER00876"/>
</dbReference>
<dbReference type="UniPathway" id="UPA00904">
    <property type="reaction ID" value="UER00877"/>
</dbReference>
<dbReference type="Proteomes" id="UP000008148">
    <property type="component" value="Chromosome"/>
</dbReference>
<dbReference type="GO" id="GO:0043715">
    <property type="term" value="F:2,3-diketo-5-methylthiopentyl-1-phosphate enolase activity"/>
    <property type="evidence" value="ECO:0007669"/>
    <property type="project" value="UniProtKB-UniRule"/>
</dbReference>
<dbReference type="GO" id="GO:0043716">
    <property type="term" value="F:2-hydroxy-3-keto-5-methylthiopentenyl-1-phosphate phosphatase activity"/>
    <property type="evidence" value="ECO:0007669"/>
    <property type="project" value="UniProtKB-UniRule"/>
</dbReference>
<dbReference type="GO" id="GO:0043874">
    <property type="term" value="F:acireductone synthase activity"/>
    <property type="evidence" value="ECO:0007669"/>
    <property type="project" value="UniProtKB-EC"/>
</dbReference>
<dbReference type="GO" id="GO:0000287">
    <property type="term" value="F:magnesium ion binding"/>
    <property type="evidence" value="ECO:0007669"/>
    <property type="project" value="UniProtKB-UniRule"/>
</dbReference>
<dbReference type="GO" id="GO:0019509">
    <property type="term" value="P:L-methionine salvage from methylthioadenosine"/>
    <property type="evidence" value="ECO:0007669"/>
    <property type="project" value="UniProtKB-UniRule"/>
</dbReference>
<dbReference type="CDD" id="cd01629">
    <property type="entry name" value="HAD_EP"/>
    <property type="match status" value="1"/>
</dbReference>
<dbReference type="FunFam" id="3.40.50.1000:FF:000079">
    <property type="entry name" value="Enolase-phosphatase E1"/>
    <property type="match status" value="1"/>
</dbReference>
<dbReference type="Gene3D" id="1.10.720.60">
    <property type="match status" value="1"/>
</dbReference>
<dbReference type="Gene3D" id="3.40.50.1000">
    <property type="entry name" value="HAD superfamily/HAD-like"/>
    <property type="match status" value="1"/>
</dbReference>
<dbReference type="HAMAP" id="MF_01681">
    <property type="entry name" value="Salvage_MtnC"/>
    <property type="match status" value="1"/>
</dbReference>
<dbReference type="InterPro" id="IPR023943">
    <property type="entry name" value="Enolase-ppase_E1"/>
</dbReference>
<dbReference type="InterPro" id="IPR036412">
    <property type="entry name" value="HAD-like_sf"/>
</dbReference>
<dbReference type="InterPro" id="IPR006439">
    <property type="entry name" value="HAD-SF_hydro_IA"/>
</dbReference>
<dbReference type="InterPro" id="IPR023214">
    <property type="entry name" value="HAD_sf"/>
</dbReference>
<dbReference type="NCBIfam" id="TIGR01691">
    <property type="entry name" value="enolase-ppase"/>
    <property type="match status" value="1"/>
</dbReference>
<dbReference type="NCBIfam" id="TIGR01549">
    <property type="entry name" value="HAD-SF-IA-v1"/>
    <property type="match status" value="1"/>
</dbReference>
<dbReference type="PANTHER" id="PTHR20371">
    <property type="entry name" value="ENOLASE-PHOSPHATASE E1"/>
    <property type="match status" value="1"/>
</dbReference>
<dbReference type="PANTHER" id="PTHR20371:SF1">
    <property type="entry name" value="ENOLASE-PHOSPHATASE E1"/>
    <property type="match status" value="1"/>
</dbReference>
<dbReference type="Pfam" id="PF00702">
    <property type="entry name" value="Hydrolase"/>
    <property type="match status" value="1"/>
</dbReference>
<dbReference type="PRINTS" id="PR00413">
    <property type="entry name" value="HADHALOGNASE"/>
</dbReference>
<dbReference type="SFLD" id="SFLDF00044">
    <property type="entry name" value="enolase-phosphatase"/>
    <property type="match status" value="1"/>
</dbReference>
<dbReference type="SFLD" id="SFLDS00003">
    <property type="entry name" value="Haloacid_Dehalogenase"/>
    <property type="match status" value="1"/>
</dbReference>
<dbReference type="SUPFAM" id="SSF56784">
    <property type="entry name" value="HAD-like"/>
    <property type="match status" value="1"/>
</dbReference>
<keyword id="KW-0028">Amino-acid biosynthesis</keyword>
<keyword id="KW-0378">Hydrolase</keyword>
<keyword id="KW-0460">Magnesium</keyword>
<keyword id="KW-0479">Metal-binding</keyword>
<keyword id="KW-0486">Methionine biosynthesis</keyword>
<keyword id="KW-1185">Reference proteome</keyword>
<evidence type="ECO:0000255" key="1">
    <source>
        <dbReference type="HAMAP-Rule" id="MF_01681"/>
    </source>
</evidence>
<accession>A8ANI1</accession>
<organism>
    <name type="scientific">Citrobacter koseri (strain ATCC BAA-895 / CDC 4225-83 / SGSC4696)</name>
    <dbReference type="NCBI Taxonomy" id="290338"/>
    <lineage>
        <taxon>Bacteria</taxon>
        <taxon>Pseudomonadati</taxon>
        <taxon>Pseudomonadota</taxon>
        <taxon>Gammaproteobacteria</taxon>
        <taxon>Enterobacterales</taxon>
        <taxon>Enterobacteriaceae</taxon>
        <taxon>Citrobacter</taxon>
    </lineage>
</organism>
<protein>
    <recommendedName>
        <fullName evidence="1">Enolase-phosphatase E1</fullName>
        <ecNumber evidence="1">3.1.3.77</ecNumber>
    </recommendedName>
    <alternativeName>
        <fullName evidence="1">2,3-diketo-5-methylthio-1-phosphopentane phosphatase</fullName>
    </alternativeName>
</protein>